<keyword id="KW-0997">Cell inner membrane</keyword>
<keyword id="KW-1003">Cell membrane</keyword>
<keyword id="KW-0375">Hydrogen ion transport</keyword>
<keyword id="KW-0406">Ion transport</keyword>
<keyword id="KW-0472">Membrane</keyword>
<keyword id="KW-1185">Reference proteome</keyword>
<keyword id="KW-0812">Transmembrane</keyword>
<keyword id="KW-1133">Transmembrane helix</keyword>
<keyword id="KW-0813">Transport</keyword>
<comment type="function">
    <text evidence="1">Required for H(+) efflux immediately after light irradiation to form a rapid H(+) concentration gradient across the thylakoid membranes. Together with PxcL, contributes to transient H(+) uptake following dark to light transition.</text>
</comment>
<comment type="subcellular location">
    <subcellularLocation>
        <location evidence="1">Cell inner membrane</location>
        <topology evidence="1">Multi-pass membrane protein</topology>
    </subcellularLocation>
</comment>
<comment type="similarity">
    <text evidence="1">Belongs to the CemA family.</text>
</comment>
<feature type="chain" id="PRO_1000140911" description="Proton extrusion protein PxcA">
    <location>
        <begin position="1"/>
        <end position="448"/>
    </location>
</feature>
<feature type="transmembrane region" description="Helical" evidence="1">
    <location>
        <begin position="231"/>
        <end position="251"/>
    </location>
</feature>
<feature type="transmembrane region" description="Helical" evidence="1">
    <location>
        <begin position="323"/>
        <end position="343"/>
    </location>
</feature>
<feature type="transmembrane region" description="Helical" evidence="1">
    <location>
        <begin position="372"/>
        <end position="392"/>
    </location>
</feature>
<feature type="transmembrane region" description="Helical" evidence="1">
    <location>
        <begin position="408"/>
        <end position="428"/>
    </location>
</feature>
<protein>
    <recommendedName>
        <fullName evidence="1">Proton extrusion protein PxcA</fullName>
    </recommendedName>
</protein>
<proteinExistence type="inferred from homology"/>
<organism>
    <name type="scientific">Rippkaea orientalis (strain PCC 8801 / RF-1)</name>
    <name type="common">Cyanothece sp. (strain PCC 8801)</name>
    <dbReference type="NCBI Taxonomy" id="41431"/>
    <lineage>
        <taxon>Bacteria</taxon>
        <taxon>Bacillati</taxon>
        <taxon>Cyanobacteriota</taxon>
        <taxon>Cyanophyceae</taxon>
        <taxon>Oscillatoriophycideae</taxon>
        <taxon>Chroococcales</taxon>
        <taxon>Aphanothecaceae</taxon>
        <taxon>Rippkaea</taxon>
        <taxon>Rippkaea orientalis</taxon>
    </lineage>
</organism>
<evidence type="ECO:0000255" key="1">
    <source>
        <dbReference type="HAMAP-Rule" id="MF_01308"/>
    </source>
</evidence>
<reference key="1">
    <citation type="journal article" date="2011" name="MBio">
        <title>Novel metabolic attributes of the genus Cyanothece, comprising a group of unicellular nitrogen-fixing Cyanobacteria.</title>
        <authorList>
            <person name="Bandyopadhyay A."/>
            <person name="Elvitigala T."/>
            <person name="Welsh E."/>
            <person name="Stockel J."/>
            <person name="Liberton M."/>
            <person name="Min H."/>
            <person name="Sherman L.A."/>
            <person name="Pakrasi H.B."/>
        </authorList>
    </citation>
    <scope>NUCLEOTIDE SEQUENCE [LARGE SCALE GENOMIC DNA]</scope>
    <source>
        <strain>PCC 8801 / RF-1</strain>
    </source>
</reference>
<accession>B7K2V6</accession>
<dbReference type="EMBL" id="CP001287">
    <property type="protein sequence ID" value="ACK67657.1"/>
    <property type="molecule type" value="Genomic_DNA"/>
</dbReference>
<dbReference type="RefSeq" id="WP_012596915.1">
    <property type="nucleotide sequence ID" value="NC_011726.1"/>
</dbReference>
<dbReference type="STRING" id="41431.PCC8801_3701"/>
<dbReference type="KEGG" id="cyp:PCC8801_3701"/>
<dbReference type="eggNOG" id="ENOG502Z8DN">
    <property type="taxonomic scope" value="Bacteria"/>
</dbReference>
<dbReference type="HOGENOM" id="CLU_690401_0_0_3"/>
<dbReference type="OrthoDB" id="418298at2"/>
<dbReference type="Proteomes" id="UP000008204">
    <property type="component" value="Chromosome"/>
</dbReference>
<dbReference type="GO" id="GO:0005886">
    <property type="term" value="C:plasma membrane"/>
    <property type="evidence" value="ECO:0007669"/>
    <property type="project" value="UniProtKB-SubCell"/>
</dbReference>
<dbReference type="GO" id="GO:0015078">
    <property type="term" value="F:proton transmembrane transporter activity"/>
    <property type="evidence" value="ECO:0007669"/>
    <property type="project" value="UniProtKB-UniRule"/>
</dbReference>
<dbReference type="HAMAP" id="MF_01308">
    <property type="entry name" value="CemA_PxcA"/>
    <property type="match status" value="1"/>
</dbReference>
<dbReference type="InterPro" id="IPR004282">
    <property type="entry name" value="CemA"/>
</dbReference>
<dbReference type="NCBIfam" id="NF002703">
    <property type="entry name" value="PRK02507.1-1"/>
    <property type="match status" value="1"/>
</dbReference>
<dbReference type="PANTHER" id="PTHR33650:SF2">
    <property type="entry name" value="CHLOROPLAST ENVELOPE MEMBRANE PROTEIN"/>
    <property type="match status" value="1"/>
</dbReference>
<dbReference type="PANTHER" id="PTHR33650">
    <property type="entry name" value="CHLOROPLAST ENVELOPE MEMBRANE PROTEIN-RELATED"/>
    <property type="match status" value="1"/>
</dbReference>
<dbReference type="Pfam" id="PF03040">
    <property type="entry name" value="CemA"/>
    <property type="match status" value="1"/>
</dbReference>
<name>PXCA_RIPO1</name>
<gene>
    <name evidence="1" type="primary">pxcA</name>
    <name type="ordered locus">PCC8801_3701</name>
</gene>
<sequence length="448" mass="51343">MKLKSLIKSTSDWFSSTPERALNRAYKSALKIQEIETKHFRGQKVSRENADYGASVITYFETEVQSYLQKINMELTVFKASRLFLSLSNLQDTENNLGTGKVKSEQETTAIIIFDKLKFIDEVIAKYKSNAIEKNVSNNVAIIAASERNPEVTNSAPSGKKSTKVKDQGVKNKTINFESASQKTGVLPRSFMNTLNKIKQEIDPKSGESEEQVLTKYRKSRYRTALSIKFILLLIIIPLLIHQLTKTFFLIPVVEQYFSRHEQVIFINRDLEDEALEELQHYEETLHFRGLIGLGPELSPEKIEQEVKQKAGEITEEYRRHGIDSIANIFADLFSFIAFVLVLVNSKKEIEVVKSFLDEILYGLSDPAKAFLIILFTDMFVGFHSPHGWEVILEGVAHHFGLPENREFNFLFIATFPVILDTVLKYWIFRYLNRISPSAVATYKNMNE</sequence>